<proteinExistence type="evidence at protein level"/>
<accession>D4GVF7</accession>
<gene>
    <name type="primary">nuoCD</name>
    <name type="ordered locus">HVO_0980</name>
</gene>
<reference key="1">
    <citation type="journal article" date="2010" name="PLoS ONE">
        <title>The complete genome sequence of Haloferax volcanii DS2, a model archaeon.</title>
        <authorList>
            <person name="Hartman A.L."/>
            <person name="Norais C."/>
            <person name="Badger J.H."/>
            <person name="Delmas S."/>
            <person name="Haldenby S."/>
            <person name="Madupu R."/>
            <person name="Robinson J."/>
            <person name="Khouri H."/>
            <person name="Ren Q."/>
            <person name="Lowe T.M."/>
            <person name="Maupin-Furlow J."/>
            <person name="Pohlschroder M."/>
            <person name="Daniels C."/>
            <person name="Pfeiffer F."/>
            <person name="Allers T."/>
            <person name="Eisen J.A."/>
        </authorList>
    </citation>
    <scope>NUCLEOTIDE SEQUENCE [LARGE SCALE GENOMIC DNA]</scope>
    <source>
        <strain>ATCC 29605 / DSM 3757 / JCM 8879 / NBRC 14742 / NCIMB 2012 / VKM B-1768 / DS2</strain>
    </source>
</reference>
<reference key="2">
    <citation type="journal article" date="2010" name="Nature">
        <title>Ubiquitin-like small archaeal modifier proteins (SAMPs) in Haloferax volcanii.</title>
        <authorList>
            <person name="Humbard M.A."/>
            <person name="Miranda H.V."/>
            <person name="Lim J.M."/>
            <person name="Krause D.J."/>
            <person name="Pritz J.R."/>
            <person name="Zhou G."/>
            <person name="Chen S."/>
            <person name="Wells L."/>
            <person name="Maupin-Furlow J.A."/>
        </authorList>
    </citation>
    <scope>SAMPYLATION AT LYS-517</scope>
    <scope>IDENTIFICATION BY MASS SPECTROMETRY</scope>
</reference>
<comment type="function">
    <text evidence="1">NDH-1 shuttles electrons from NADH, via FMN and iron-sulfur (Fe-S) centers, to quinones in the respiratory chain. Couples the redox reaction to proton translocation (for every two electrons transferred, four hydrogen ions are translocated across the cytoplasmic membrane), and thus conserves the redox energy in a proton gradient (By similarity).</text>
</comment>
<comment type="catalytic activity">
    <reaction>
        <text>a quinone + NADH + 5 H(+)(in) = a quinol + NAD(+) + 4 H(+)(out)</text>
        <dbReference type="Rhea" id="RHEA:57888"/>
        <dbReference type="ChEBI" id="CHEBI:15378"/>
        <dbReference type="ChEBI" id="CHEBI:24646"/>
        <dbReference type="ChEBI" id="CHEBI:57540"/>
        <dbReference type="ChEBI" id="CHEBI:57945"/>
        <dbReference type="ChEBI" id="CHEBI:132124"/>
    </reaction>
</comment>
<comment type="subunit">
    <text evidence="1">NDH-1 is composed of 13 different subunits. Subunits NuoB, CD, E, F, and G constitute the peripheral sector of the complex (By similarity).</text>
</comment>
<comment type="subcellular location">
    <subcellularLocation>
        <location evidence="1">Cell membrane</location>
        <topology evidence="1">Peripheral membrane protein</topology>
        <orientation evidence="1">Cytoplasmic side</orientation>
    </subcellularLocation>
</comment>
<comment type="similarity">
    <text evidence="4">In the N-terminal section; belongs to the complex I 30 kDa subunit family.</text>
</comment>
<comment type="similarity">
    <text evidence="4">In the C-terminal section; belongs to the complex I 49 kDa subunit family.</text>
</comment>
<name>NUOCD_HALVD</name>
<keyword id="KW-1003">Cell membrane</keyword>
<keyword id="KW-1017">Isopeptide bond</keyword>
<keyword id="KW-0472">Membrane</keyword>
<keyword id="KW-0511">Multifunctional enzyme</keyword>
<keyword id="KW-0520">NAD</keyword>
<keyword id="KW-0874">Quinone</keyword>
<keyword id="KW-1185">Reference proteome</keyword>
<keyword id="KW-1278">Translocase</keyword>
<keyword id="KW-0813">Transport</keyword>
<keyword id="KW-0832">Ubl conjugation</keyword>
<protein>
    <recommendedName>
        <fullName>NADH-quinone oxidoreductase subunit C/D</fullName>
        <ecNumber>7.1.1.-</ecNumber>
    </recommendedName>
    <alternativeName>
        <fullName>NADH dehydrogenase I subunit C/D</fullName>
    </alternativeName>
    <alternativeName>
        <fullName>NDH-1 subunit C/D</fullName>
    </alternativeName>
</protein>
<evidence type="ECO:0000250" key="1"/>
<evidence type="ECO:0000256" key="2">
    <source>
        <dbReference type="SAM" id="MobiDB-lite"/>
    </source>
</evidence>
<evidence type="ECO:0000269" key="3">
    <source>
    </source>
</evidence>
<evidence type="ECO:0000305" key="4"/>
<organism>
    <name type="scientific">Haloferax volcanii (strain ATCC 29605 / DSM 3757 / JCM 8879 / NBRC 14742 / NCIMB 2012 / VKM B-1768 / DS2)</name>
    <name type="common">Halobacterium volcanii</name>
    <dbReference type="NCBI Taxonomy" id="309800"/>
    <lineage>
        <taxon>Archaea</taxon>
        <taxon>Methanobacteriati</taxon>
        <taxon>Methanobacteriota</taxon>
        <taxon>Stenosarchaea group</taxon>
        <taxon>Halobacteria</taxon>
        <taxon>Halobacteriales</taxon>
        <taxon>Haloferacaceae</taxon>
        <taxon>Haloferax</taxon>
    </lineage>
</organism>
<sequence>MSLEEQQSDDPAELESGVSRGDELAELLGDLVVGREEHLNAPGLVIRPDEVQDALFKLRDEAGFDHLSCVTAQEYEDRYESIYHLTKFDDRTDEVSVVVPTSKDNPVSQSAEPVFRTADWHEREAYDLVGIQYEDHPDLRRILLPETWQGHPLGLDYDQDRPQIATLREHANPLEEDHRAGDSNTMYINIGPHHPATHGVLHVETVVDGEQVVDLESDIGYLHRCEEQMCQQGTYRHQIMPYPDRWDYISSGLLNEWAYARAAEDLADIEVPEYAQIIRTMGAELCRIASHMIALGTFALDVYGDFTAIFMYAMRDREIVQNILEDLTGQRMMFNYFRLGGVVWDLPEPREEFFEKIRDFMDGLPQALEEYHDMITSNEILQARTVGTGVLSPEVAKSYGATGPVARGSGIDYDLRRDDSYGYYDELEWDVVVEDGCDNFSRLLVRMREVEESAKIIQQCVDLLEDWPEDERNIQANVPRTLKPDEDTEIYRAVEGAKGELGIYIRADGTDKPARFKIRSPCFSNLQTLPEMSEGEYIPDMIASLGSLDIVLGEVDR</sequence>
<feature type="chain" id="PRO_0000397108" description="NADH-quinone oxidoreductase subunit C/D">
    <location>
        <begin position="1"/>
        <end position="557"/>
    </location>
</feature>
<feature type="region of interest" description="NADH dehydrogenase I subunit C">
    <location>
        <begin position="1"/>
        <end position="174"/>
    </location>
</feature>
<feature type="region of interest" description="Disordered" evidence="2">
    <location>
        <begin position="1"/>
        <end position="20"/>
    </location>
</feature>
<feature type="region of interest" description="NADH dehydrogenase I subunit D">
    <location>
        <begin position="184"/>
        <end position="557"/>
    </location>
</feature>
<feature type="compositionally biased region" description="Acidic residues" evidence="2">
    <location>
        <begin position="1"/>
        <end position="13"/>
    </location>
</feature>
<feature type="cross-link" description="Glycyl lysine isopeptide (Lys-Gly) (interchain with G-Cter in SAMP2)" evidence="3">
    <location>
        <position position="517"/>
    </location>
</feature>
<dbReference type="EC" id="7.1.1.-"/>
<dbReference type="EMBL" id="CP001956">
    <property type="protein sequence ID" value="ADE04185.1"/>
    <property type="molecule type" value="Genomic_DNA"/>
</dbReference>
<dbReference type="RefSeq" id="WP_004043963.1">
    <property type="nucleotide sequence ID" value="NC_013967.1"/>
</dbReference>
<dbReference type="SMR" id="D4GVF7"/>
<dbReference type="STRING" id="309800.HVO_0980"/>
<dbReference type="PaxDb" id="309800-C498_13864"/>
<dbReference type="EnsemblBacteria" id="ADE04185">
    <property type="protein sequence ID" value="ADE04185"/>
    <property type="gene ID" value="HVO_0980"/>
</dbReference>
<dbReference type="GeneID" id="8926295"/>
<dbReference type="KEGG" id="hvo:HVO_0980"/>
<dbReference type="eggNOG" id="arCOG01548">
    <property type="taxonomic scope" value="Archaea"/>
</dbReference>
<dbReference type="HOGENOM" id="CLU_015134_3_2_2"/>
<dbReference type="OrthoDB" id="43567at2157"/>
<dbReference type="Proteomes" id="UP000008243">
    <property type="component" value="Chromosome"/>
</dbReference>
<dbReference type="GO" id="GO:0005886">
    <property type="term" value="C:plasma membrane"/>
    <property type="evidence" value="ECO:0007669"/>
    <property type="project" value="UniProtKB-SubCell"/>
</dbReference>
<dbReference type="GO" id="GO:0051287">
    <property type="term" value="F:NAD binding"/>
    <property type="evidence" value="ECO:0007669"/>
    <property type="project" value="InterPro"/>
</dbReference>
<dbReference type="GO" id="GO:0008137">
    <property type="term" value="F:NADH dehydrogenase (ubiquinone) activity"/>
    <property type="evidence" value="ECO:0007669"/>
    <property type="project" value="InterPro"/>
</dbReference>
<dbReference type="GO" id="GO:0048038">
    <property type="term" value="F:quinone binding"/>
    <property type="evidence" value="ECO:0007669"/>
    <property type="project" value="UniProtKB-KW"/>
</dbReference>
<dbReference type="Gene3D" id="1.10.645.10">
    <property type="entry name" value="Cytochrome-c3 Hydrogenase, chain B"/>
    <property type="match status" value="1"/>
</dbReference>
<dbReference type="Gene3D" id="3.30.460.80">
    <property type="entry name" value="NADH:ubiquinone oxidoreductase, 30kDa subunit"/>
    <property type="match status" value="1"/>
</dbReference>
<dbReference type="InterPro" id="IPR001135">
    <property type="entry name" value="NADH_Q_OxRdtase_suD"/>
</dbReference>
<dbReference type="InterPro" id="IPR037232">
    <property type="entry name" value="NADH_quin_OxRdtase_su_C/D-like"/>
</dbReference>
<dbReference type="InterPro" id="IPR001268">
    <property type="entry name" value="NADH_UbQ_OxRdtase_30kDa_su"/>
</dbReference>
<dbReference type="InterPro" id="IPR020396">
    <property type="entry name" value="NADH_UbQ_OxRdtase_CS"/>
</dbReference>
<dbReference type="InterPro" id="IPR022885">
    <property type="entry name" value="NDH1_su_D/H"/>
</dbReference>
<dbReference type="InterPro" id="IPR029014">
    <property type="entry name" value="NiFe-Hase_large"/>
</dbReference>
<dbReference type="NCBIfam" id="NF004739">
    <property type="entry name" value="PRK06075.1"/>
    <property type="match status" value="1"/>
</dbReference>
<dbReference type="PANTHER" id="PTHR11993:SF10">
    <property type="entry name" value="NADH DEHYDROGENASE [UBIQUINONE] IRON-SULFUR PROTEIN 2, MITOCHONDRIAL"/>
    <property type="match status" value="1"/>
</dbReference>
<dbReference type="PANTHER" id="PTHR11993">
    <property type="entry name" value="NADH-UBIQUINONE OXIDOREDUCTASE 49 KDA SUBUNIT"/>
    <property type="match status" value="1"/>
</dbReference>
<dbReference type="Pfam" id="PF00329">
    <property type="entry name" value="Complex1_30kDa"/>
    <property type="match status" value="1"/>
</dbReference>
<dbReference type="Pfam" id="PF00346">
    <property type="entry name" value="Complex1_49kDa"/>
    <property type="match status" value="1"/>
</dbReference>
<dbReference type="SUPFAM" id="SSF56762">
    <property type="entry name" value="HydB/Nqo4-like"/>
    <property type="match status" value="1"/>
</dbReference>
<dbReference type="SUPFAM" id="SSF143243">
    <property type="entry name" value="Nqo5-like"/>
    <property type="match status" value="1"/>
</dbReference>
<dbReference type="PROSITE" id="PS00542">
    <property type="entry name" value="COMPLEX1_30K"/>
    <property type="match status" value="1"/>
</dbReference>